<sequence length="552" mass="60419">MAKPSTPSRRVVLPRSLNNSTVNPPASAAALQGALLAFSHAVPPKPQSPMMADRPPVSLLDSDPDPPSELPEPGSIKGKIALFSANSTATAPSDRPRSAHESVPEIARQKSPQLLAAEIATGSVQGPGGKTTSDDVQRTRLQRNGAVPSRDLSSPIPVRKPVINPRLLDPYQDETPEHSPPKPGSDQRPVSSKSSASPRPPIRKPRPVPPPIPRKPSPALSEPASKSASHRFENGLRRDEARKPPLPLRSKASAATLSEERPPTLPPRRAATAHDLYINQSTPGRAESPAGLSSSPSVVSLYSPAHNASRTSVHTVASRDAPSDAVAASSTASNRALQARKSPPPPPPQRRRRSRSRSLLHVQHKKDRTPNPSPGGLRETLRPQARSDDEDEQRRRQHKSHIINKHPHKHNEGERRRWRSEITEKERKRYEGVWAANKGLLIHPSQVLDENLEPDKIPPGMYPPAALDMVVNLVVRDIWSRSRLPNHVLEQIWNLVDGQKIGLLTRAEFVVGMWLIDQQLRGHKLPAVVSESVWASVTRVPGISLEPYNTKH</sequence>
<protein>
    <recommendedName>
        <fullName>Increased rDNA silencing protein 4</fullName>
    </recommendedName>
</protein>
<comment type="function">
    <text evidence="1">Positive regulator of phosphatidylinositol 4,5-bisphosphate turnover and negatively regulates signaling through the cell integrity pathway. Involved in rDNA silencing (By similarity).</text>
</comment>
<comment type="similarity">
    <text evidence="4">Belongs to the IRS4 family.</text>
</comment>
<gene>
    <name type="primary">irs4</name>
    <name type="ORF">AN0095</name>
</gene>
<reference key="1">
    <citation type="journal article" date="2005" name="Nature">
        <title>Sequencing of Aspergillus nidulans and comparative analysis with A. fumigatus and A. oryzae.</title>
        <authorList>
            <person name="Galagan J.E."/>
            <person name="Calvo S.E."/>
            <person name="Cuomo C."/>
            <person name="Ma L.-J."/>
            <person name="Wortman J.R."/>
            <person name="Batzoglou S."/>
            <person name="Lee S.-I."/>
            <person name="Bastuerkmen M."/>
            <person name="Spevak C.C."/>
            <person name="Clutterbuck J."/>
            <person name="Kapitonov V."/>
            <person name="Jurka J."/>
            <person name="Scazzocchio C."/>
            <person name="Farman M.L."/>
            <person name="Butler J."/>
            <person name="Purcell S."/>
            <person name="Harris S."/>
            <person name="Braus G.H."/>
            <person name="Draht O."/>
            <person name="Busch S."/>
            <person name="D'Enfert C."/>
            <person name="Bouchier C."/>
            <person name="Goldman G.H."/>
            <person name="Bell-Pedersen D."/>
            <person name="Griffiths-Jones S."/>
            <person name="Doonan J.H."/>
            <person name="Yu J."/>
            <person name="Vienken K."/>
            <person name="Pain A."/>
            <person name="Freitag M."/>
            <person name="Selker E.U."/>
            <person name="Archer D.B."/>
            <person name="Penalva M.A."/>
            <person name="Oakley B.R."/>
            <person name="Momany M."/>
            <person name="Tanaka T."/>
            <person name="Kumagai T."/>
            <person name="Asai K."/>
            <person name="Machida M."/>
            <person name="Nierman W.C."/>
            <person name="Denning D.W."/>
            <person name="Caddick M.X."/>
            <person name="Hynes M."/>
            <person name="Paoletti M."/>
            <person name="Fischer R."/>
            <person name="Miller B.L."/>
            <person name="Dyer P.S."/>
            <person name="Sachs M.S."/>
            <person name="Osmani S.A."/>
            <person name="Birren B.W."/>
        </authorList>
    </citation>
    <scope>NUCLEOTIDE SEQUENCE [LARGE SCALE GENOMIC DNA]</scope>
    <source>
        <strain>FGSC A4 / ATCC 38163 / CBS 112.46 / NRRL 194 / M139</strain>
    </source>
</reference>
<reference key="2">
    <citation type="journal article" date="2009" name="Fungal Genet. Biol.">
        <title>The 2008 update of the Aspergillus nidulans genome annotation: a community effort.</title>
        <authorList>
            <person name="Wortman J.R."/>
            <person name="Gilsenan J.M."/>
            <person name="Joardar V."/>
            <person name="Deegan J."/>
            <person name="Clutterbuck J."/>
            <person name="Andersen M.R."/>
            <person name="Archer D."/>
            <person name="Bencina M."/>
            <person name="Braus G."/>
            <person name="Coutinho P."/>
            <person name="von Dohren H."/>
            <person name="Doonan J."/>
            <person name="Driessen A.J."/>
            <person name="Durek P."/>
            <person name="Espeso E."/>
            <person name="Fekete E."/>
            <person name="Flipphi M."/>
            <person name="Estrada C.G."/>
            <person name="Geysens S."/>
            <person name="Goldman G."/>
            <person name="de Groot P.W."/>
            <person name="Hansen K."/>
            <person name="Harris S.D."/>
            <person name="Heinekamp T."/>
            <person name="Helmstaedt K."/>
            <person name="Henrissat B."/>
            <person name="Hofmann G."/>
            <person name="Homan T."/>
            <person name="Horio T."/>
            <person name="Horiuchi H."/>
            <person name="James S."/>
            <person name="Jones M."/>
            <person name="Karaffa L."/>
            <person name="Karanyi Z."/>
            <person name="Kato M."/>
            <person name="Keller N."/>
            <person name="Kelly D.E."/>
            <person name="Kiel J.A."/>
            <person name="Kim J.M."/>
            <person name="van der Klei I.J."/>
            <person name="Klis F.M."/>
            <person name="Kovalchuk A."/>
            <person name="Krasevec N."/>
            <person name="Kubicek C.P."/>
            <person name="Liu B."/>
            <person name="Maccabe A."/>
            <person name="Meyer V."/>
            <person name="Mirabito P."/>
            <person name="Miskei M."/>
            <person name="Mos M."/>
            <person name="Mullins J."/>
            <person name="Nelson D.R."/>
            <person name="Nielsen J."/>
            <person name="Oakley B.R."/>
            <person name="Osmani S.A."/>
            <person name="Pakula T."/>
            <person name="Paszewski A."/>
            <person name="Paulsen I."/>
            <person name="Pilsyk S."/>
            <person name="Pocsi I."/>
            <person name="Punt P.J."/>
            <person name="Ram A.F."/>
            <person name="Ren Q."/>
            <person name="Robellet X."/>
            <person name="Robson G."/>
            <person name="Seiboth B."/>
            <person name="van Solingen P."/>
            <person name="Specht T."/>
            <person name="Sun J."/>
            <person name="Taheri-Talesh N."/>
            <person name="Takeshita N."/>
            <person name="Ussery D."/>
            <person name="vanKuyk P.A."/>
            <person name="Visser H."/>
            <person name="van de Vondervoort P.J."/>
            <person name="de Vries R.P."/>
            <person name="Walton J."/>
            <person name="Xiang X."/>
            <person name="Xiong Y."/>
            <person name="Zeng A.P."/>
            <person name="Brandt B.W."/>
            <person name="Cornell M.J."/>
            <person name="van den Hondel C.A."/>
            <person name="Visser J."/>
            <person name="Oliver S.G."/>
            <person name="Turner G."/>
        </authorList>
    </citation>
    <scope>GENOME REANNOTATION</scope>
    <source>
        <strain>FGSC A4 / ATCC 38163 / CBS 112.46 / NRRL 194 / M139</strain>
    </source>
</reference>
<accession>Q5BH85</accession>
<accession>C8VQN2</accession>
<organism>
    <name type="scientific">Emericella nidulans (strain FGSC A4 / ATCC 38163 / CBS 112.46 / NRRL 194 / M139)</name>
    <name type="common">Aspergillus nidulans</name>
    <dbReference type="NCBI Taxonomy" id="227321"/>
    <lineage>
        <taxon>Eukaryota</taxon>
        <taxon>Fungi</taxon>
        <taxon>Dikarya</taxon>
        <taxon>Ascomycota</taxon>
        <taxon>Pezizomycotina</taxon>
        <taxon>Eurotiomycetes</taxon>
        <taxon>Eurotiomycetidae</taxon>
        <taxon>Eurotiales</taxon>
        <taxon>Aspergillaceae</taxon>
        <taxon>Aspergillus</taxon>
        <taxon>Aspergillus subgen. Nidulantes</taxon>
    </lineage>
</organism>
<proteinExistence type="inferred from homology"/>
<name>IRS4_EMENI</name>
<feature type="chain" id="PRO_0000308757" description="Increased rDNA silencing protein 4">
    <location>
        <begin position="1"/>
        <end position="552"/>
    </location>
</feature>
<feature type="domain" description="EH" evidence="2">
    <location>
        <begin position="451"/>
        <end position="540"/>
    </location>
</feature>
<feature type="region of interest" description="Disordered" evidence="3">
    <location>
        <begin position="1"/>
        <end position="25"/>
    </location>
</feature>
<feature type="region of interest" description="Disordered" evidence="3">
    <location>
        <begin position="41"/>
        <end position="419"/>
    </location>
</feature>
<feature type="compositionally biased region" description="Basic and acidic residues" evidence="3">
    <location>
        <begin position="94"/>
        <end position="103"/>
    </location>
</feature>
<feature type="compositionally biased region" description="Low complexity" evidence="3">
    <location>
        <begin position="188"/>
        <end position="197"/>
    </location>
</feature>
<feature type="compositionally biased region" description="Pro residues" evidence="3">
    <location>
        <begin position="207"/>
        <end position="216"/>
    </location>
</feature>
<feature type="compositionally biased region" description="Basic and acidic residues" evidence="3">
    <location>
        <begin position="230"/>
        <end position="243"/>
    </location>
</feature>
<feature type="compositionally biased region" description="Low complexity" evidence="3">
    <location>
        <begin position="288"/>
        <end position="305"/>
    </location>
</feature>
<feature type="compositionally biased region" description="Polar residues" evidence="3">
    <location>
        <begin position="306"/>
        <end position="315"/>
    </location>
</feature>
<feature type="compositionally biased region" description="Basic residues" evidence="3">
    <location>
        <begin position="349"/>
        <end position="367"/>
    </location>
</feature>
<feature type="compositionally biased region" description="Basic residues" evidence="3">
    <location>
        <begin position="395"/>
        <end position="409"/>
    </location>
</feature>
<feature type="compositionally biased region" description="Basic and acidic residues" evidence="3">
    <location>
        <begin position="410"/>
        <end position="419"/>
    </location>
</feature>
<keyword id="KW-0443">Lipid metabolism</keyword>
<keyword id="KW-1185">Reference proteome</keyword>
<evidence type="ECO:0000250" key="1"/>
<evidence type="ECO:0000255" key="2">
    <source>
        <dbReference type="PROSITE-ProRule" id="PRU00077"/>
    </source>
</evidence>
<evidence type="ECO:0000256" key="3">
    <source>
        <dbReference type="SAM" id="MobiDB-lite"/>
    </source>
</evidence>
<evidence type="ECO:0000305" key="4"/>
<dbReference type="EMBL" id="AACD01000003">
    <property type="protein sequence ID" value="EAA65273.1"/>
    <property type="molecule type" value="Genomic_DNA"/>
</dbReference>
<dbReference type="EMBL" id="BN001308">
    <property type="protein sequence ID" value="CBF90210.1"/>
    <property type="molecule type" value="Genomic_DNA"/>
</dbReference>
<dbReference type="RefSeq" id="XP_657699.1">
    <property type="nucleotide sequence ID" value="XM_652607.1"/>
</dbReference>
<dbReference type="SMR" id="Q5BH85"/>
<dbReference type="STRING" id="227321.Q5BH85"/>
<dbReference type="EnsemblFungi" id="CBF90210">
    <property type="protein sequence ID" value="CBF90210"/>
    <property type="gene ID" value="ANIA_00095"/>
</dbReference>
<dbReference type="KEGG" id="ani:ANIA_00095"/>
<dbReference type="VEuPathDB" id="FungiDB:AN0095"/>
<dbReference type="eggNOG" id="KOG0998">
    <property type="taxonomic scope" value="Eukaryota"/>
</dbReference>
<dbReference type="HOGENOM" id="CLU_014603_1_0_1"/>
<dbReference type="InParanoid" id="Q5BH85"/>
<dbReference type="OMA" id="TVDHTYP"/>
<dbReference type="OrthoDB" id="10045710at2759"/>
<dbReference type="Proteomes" id="UP000000560">
    <property type="component" value="Chromosome VIII"/>
</dbReference>
<dbReference type="GO" id="GO:0006629">
    <property type="term" value="P:lipid metabolic process"/>
    <property type="evidence" value="ECO:0007669"/>
    <property type="project" value="UniProtKB-KW"/>
</dbReference>
<dbReference type="CDD" id="cd00052">
    <property type="entry name" value="EH"/>
    <property type="match status" value="1"/>
</dbReference>
<dbReference type="Gene3D" id="1.10.238.10">
    <property type="entry name" value="EF-hand"/>
    <property type="match status" value="1"/>
</dbReference>
<dbReference type="InterPro" id="IPR011992">
    <property type="entry name" value="EF-hand-dom_pair"/>
</dbReference>
<dbReference type="InterPro" id="IPR000261">
    <property type="entry name" value="EH_dom"/>
</dbReference>
<dbReference type="Pfam" id="PF12763">
    <property type="entry name" value="EH"/>
    <property type="match status" value="1"/>
</dbReference>
<dbReference type="SMART" id="SM00027">
    <property type="entry name" value="EH"/>
    <property type="match status" value="1"/>
</dbReference>
<dbReference type="SUPFAM" id="SSF47473">
    <property type="entry name" value="EF-hand"/>
    <property type="match status" value="1"/>
</dbReference>
<dbReference type="PROSITE" id="PS50031">
    <property type="entry name" value="EH"/>
    <property type="match status" value="1"/>
</dbReference>